<gene>
    <name evidence="1" type="primary">pqqC</name>
    <name type="ordered locus">PputW619_4825</name>
</gene>
<comment type="function">
    <text evidence="1">Ring cyclization and eight-electron oxidation of 3a-(2-amino-2-carboxyethyl)-4,5-dioxo-4,5,6,7,8,9-hexahydroquinoline-7,9-dicarboxylic-acid to PQQ.</text>
</comment>
<comment type="catalytic activity">
    <reaction evidence="1">
        <text>6-(2-amino-2-carboxyethyl)-7,8-dioxo-1,2,3,4,7,8-hexahydroquinoline-2,4-dicarboxylate + 3 O2 = pyrroloquinoline quinone + 2 H2O2 + 2 H2O + H(+)</text>
        <dbReference type="Rhea" id="RHEA:10692"/>
        <dbReference type="ChEBI" id="CHEBI:15377"/>
        <dbReference type="ChEBI" id="CHEBI:15378"/>
        <dbReference type="ChEBI" id="CHEBI:15379"/>
        <dbReference type="ChEBI" id="CHEBI:16240"/>
        <dbReference type="ChEBI" id="CHEBI:58442"/>
        <dbReference type="ChEBI" id="CHEBI:58778"/>
        <dbReference type="EC" id="1.3.3.11"/>
    </reaction>
</comment>
<comment type="pathway">
    <text evidence="1">Cofactor biosynthesis; pyrroloquinoline quinone biosynthesis.</text>
</comment>
<comment type="similarity">
    <text evidence="1">Belongs to the PqqC family.</text>
</comment>
<feature type="chain" id="PRO_1000131179" description="Pyrroloquinoline-quinone synthase">
    <location>
        <begin position="1"/>
        <end position="251"/>
    </location>
</feature>
<accession>B1JDZ8</accession>
<sequence length="251" mass="29122">MSEALPLSPAEFEQALRAKGAYYHIHHPYHVAMYEGRATREQIQGWVANRFYYQVNIPMKDAAILANCPDREVRREWIQRLLDHDGAPGEDGGIEAWLRLGQAVGLDPDQLRSQELVLPGVRFAVDAYVNFARRASWQEAASSSLTELFAPQIHQSRLDSWPQHYPWIDPAGYEYFRTRLGQARRDVEHGLTITLQHYTTRAAQERMLEILQFKLDILWSMLDAMSMAYELHRPPYHTVTQQRVWHKGIAL</sequence>
<dbReference type="EC" id="1.3.3.11" evidence="1"/>
<dbReference type="EMBL" id="CP000949">
    <property type="protein sequence ID" value="ACA75301.1"/>
    <property type="molecule type" value="Genomic_DNA"/>
</dbReference>
<dbReference type="SMR" id="B1JDZ8"/>
<dbReference type="STRING" id="390235.PputW619_4825"/>
<dbReference type="KEGG" id="ppw:PputW619_4825"/>
<dbReference type="eggNOG" id="COG5424">
    <property type="taxonomic scope" value="Bacteria"/>
</dbReference>
<dbReference type="HOGENOM" id="CLU_080136_0_0_6"/>
<dbReference type="OrthoDB" id="9800756at2"/>
<dbReference type="UniPathway" id="UPA00539"/>
<dbReference type="GO" id="GO:0033732">
    <property type="term" value="F:pyrroloquinoline-quinone synthase activity"/>
    <property type="evidence" value="ECO:0007669"/>
    <property type="project" value="UniProtKB-EC"/>
</dbReference>
<dbReference type="GO" id="GO:0018189">
    <property type="term" value="P:pyrroloquinoline quinone biosynthetic process"/>
    <property type="evidence" value="ECO:0007669"/>
    <property type="project" value="UniProtKB-UniRule"/>
</dbReference>
<dbReference type="GO" id="GO:0006790">
    <property type="term" value="P:sulfur compound metabolic process"/>
    <property type="evidence" value="ECO:0007669"/>
    <property type="project" value="UniProtKB-ARBA"/>
</dbReference>
<dbReference type="CDD" id="cd19370">
    <property type="entry name" value="TenA_PqqC"/>
    <property type="match status" value="1"/>
</dbReference>
<dbReference type="Gene3D" id="1.20.910.10">
    <property type="entry name" value="Heme oxygenase-like"/>
    <property type="match status" value="1"/>
</dbReference>
<dbReference type="HAMAP" id="MF_00654">
    <property type="entry name" value="PQQ_syn_PqqC"/>
    <property type="match status" value="1"/>
</dbReference>
<dbReference type="InterPro" id="IPR016084">
    <property type="entry name" value="Haem_Oase-like_multi-hlx"/>
</dbReference>
<dbReference type="InterPro" id="IPR011845">
    <property type="entry name" value="PqqC"/>
</dbReference>
<dbReference type="InterPro" id="IPR039068">
    <property type="entry name" value="PqqC-like"/>
</dbReference>
<dbReference type="InterPro" id="IPR004305">
    <property type="entry name" value="Thiaminase-2/PQQC"/>
</dbReference>
<dbReference type="NCBIfam" id="TIGR02111">
    <property type="entry name" value="PQQ_syn_pqqC"/>
    <property type="match status" value="1"/>
</dbReference>
<dbReference type="PANTHER" id="PTHR40279:SF3">
    <property type="entry name" value="4-AMINOBENZOATE SYNTHASE"/>
    <property type="match status" value="1"/>
</dbReference>
<dbReference type="PANTHER" id="PTHR40279">
    <property type="entry name" value="PQQC-LIKE PROTEIN"/>
    <property type="match status" value="1"/>
</dbReference>
<dbReference type="Pfam" id="PF03070">
    <property type="entry name" value="TENA_THI-4"/>
    <property type="match status" value="1"/>
</dbReference>
<dbReference type="SUPFAM" id="SSF48613">
    <property type="entry name" value="Heme oxygenase-like"/>
    <property type="match status" value="1"/>
</dbReference>
<evidence type="ECO:0000255" key="1">
    <source>
        <dbReference type="HAMAP-Rule" id="MF_00654"/>
    </source>
</evidence>
<name>PQQC_PSEPW</name>
<reference key="1">
    <citation type="submission" date="2008-02" db="EMBL/GenBank/DDBJ databases">
        <title>Complete sequence of Pseudomonas putida W619.</title>
        <authorList>
            <person name="Copeland A."/>
            <person name="Lucas S."/>
            <person name="Lapidus A."/>
            <person name="Barry K."/>
            <person name="Detter J.C."/>
            <person name="Glavina del Rio T."/>
            <person name="Dalin E."/>
            <person name="Tice H."/>
            <person name="Pitluck S."/>
            <person name="Chain P."/>
            <person name="Malfatti S."/>
            <person name="Shin M."/>
            <person name="Vergez L."/>
            <person name="Schmutz J."/>
            <person name="Larimer F."/>
            <person name="Land M."/>
            <person name="Hauser L."/>
            <person name="Kyrpides N."/>
            <person name="Kim E."/>
            <person name="Taghavi S."/>
            <person name="Vangronsveld D."/>
            <person name="van der Lelie D."/>
            <person name="Richardson P."/>
        </authorList>
    </citation>
    <scope>NUCLEOTIDE SEQUENCE [LARGE SCALE GENOMIC DNA]</scope>
    <source>
        <strain>W619</strain>
    </source>
</reference>
<organism>
    <name type="scientific">Pseudomonas putida (strain W619)</name>
    <dbReference type="NCBI Taxonomy" id="390235"/>
    <lineage>
        <taxon>Bacteria</taxon>
        <taxon>Pseudomonadati</taxon>
        <taxon>Pseudomonadota</taxon>
        <taxon>Gammaproteobacteria</taxon>
        <taxon>Pseudomonadales</taxon>
        <taxon>Pseudomonadaceae</taxon>
        <taxon>Pseudomonas</taxon>
    </lineage>
</organism>
<protein>
    <recommendedName>
        <fullName evidence="1">Pyrroloquinoline-quinone synthase</fullName>
        <ecNumber evidence="1">1.3.3.11</ecNumber>
    </recommendedName>
    <alternativeName>
        <fullName evidence="1">Coenzyme PQQ synthesis protein C</fullName>
    </alternativeName>
    <alternativeName>
        <fullName evidence="1">Pyrroloquinoline quinone biosynthesis protein C</fullName>
    </alternativeName>
</protein>
<keyword id="KW-0560">Oxidoreductase</keyword>
<keyword id="KW-0884">PQQ biosynthesis</keyword>
<proteinExistence type="inferred from homology"/>